<dbReference type="EC" id="3.5.1.25" evidence="2"/>
<dbReference type="EMBL" id="AK077584">
    <property type="protein sequence ID" value="BAC36877.1"/>
    <property type="molecule type" value="mRNA"/>
</dbReference>
<dbReference type="EMBL" id="AK090009">
    <property type="protein sequence ID" value="BAC41042.1"/>
    <property type="molecule type" value="mRNA"/>
</dbReference>
<dbReference type="EMBL" id="AK159860">
    <property type="protein sequence ID" value="BAE35434.1"/>
    <property type="molecule type" value="mRNA"/>
</dbReference>
<dbReference type="EMBL" id="AK168432">
    <property type="protein sequence ID" value="BAE40339.1"/>
    <property type="molecule type" value="mRNA"/>
</dbReference>
<dbReference type="EMBL" id="BC037005">
    <property type="protein sequence ID" value="AAH37005.1"/>
    <property type="molecule type" value="mRNA"/>
</dbReference>
<dbReference type="CCDS" id="CCDS28475.1"/>
<dbReference type="RefSeq" id="NP_766523.2">
    <property type="nucleotide sequence ID" value="NM_172935.4"/>
</dbReference>
<dbReference type="SMR" id="Q8JZV7"/>
<dbReference type="BioGRID" id="232838">
    <property type="interactions" value="1"/>
</dbReference>
<dbReference type="FunCoup" id="Q8JZV7">
    <property type="interactions" value="381"/>
</dbReference>
<dbReference type="STRING" id="10090.ENSMUSP00000036141"/>
<dbReference type="MEROPS" id="M38.979"/>
<dbReference type="iPTMnet" id="Q8JZV7"/>
<dbReference type="PhosphoSitePlus" id="Q8JZV7"/>
<dbReference type="REPRODUCTION-2DPAGE" id="Q8JZV7"/>
<dbReference type="jPOST" id="Q8JZV7"/>
<dbReference type="PaxDb" id="10090-ENSMUSP00000036141"/>
<dbReference type="PeptideAtlas" id="Q8JZV7"/>
<dbReference type="ProteomicsDB" id="287603"/>
<dbReference type="Pumba" id="Q8JZV7"/>
<dbReference type="DNASU" id="245847"/>
<dbReference type="Ensembl" id="ENSMUST00000040735.12">
    <property type="protein sequence ID" value="ENSMUSP00000036141.6"/>
    <property type="gene ID" value="ENSMUSG00000036820.13"/>
</dbReference>
<dbReference type="GeneID" id="245847"/>
<dbReference type="KEGG" id="mmu:245847"/>
<dbReference type="UCSC" id="uc008aum.1">
    <property type="organism name" value="mouse"/>
</dbReference>
<dbReference type="AGR" id="MGI:2443978"/>
<dbReference type="CTD" id="51005"/>
<dbReference type="MGI" id="MGI:2443978">
    <property type="gene designation" value="Amdhd2"/>
</dbReference>
<dbReference type="VEuPathDB" id="HostDB:ENSMUSG00000036820"/>
<dbReference type="eggNOG" id="KOG3892">
    <property type="taxonomic scope" value="Eukaryota"/>
</dbReference>
<dbReference type="GeneTree" id="ENSGT00390000012605"/>
<dbReference type="HOGENOM" id="CLU_032482_0_2_1"/>
<dbReference type="InParanoid" id="Q8JZV7"/>
<dbReference type="OMA" id="PCRKGAH"/>
<dbReference type="PhylomeDB" id="Q8JZV7"/>
<dbReference type="TreeFam" id="TF315036"/>
<dbReference type="Reactome" id="R-MMU-446210">
    <property type="pathway name" value="Synthesis of UDP-N-acetyl-glucosamine"/>
</dbReference>
<dbReference type="UniPathway" id="UPA00629"/>
<dbReference type="BioGRID-ORCS" id="245847">
    <property type="hits" value="5 hits in 77 CRISPR screens"/>
</dbReference>
<dbReference type="PRO" id="PR:Q8JZV7"/>
<dbReference type="Proteomes" id="UP000000589">
    <property type="component" value="Chromosome 17"/>
</dbReference>
<dbReference type="RNAct" id="Q8JZV7">
    <property type="molecule type" value="protein"/>
</dbReference>
<dbReference type="Bgee" id="ENSMUSG00000036820">
    <property type="expression patterns" value="Expressed in right kidney and 182 other cell types or tissues"/>
</dbReference>
<dbReference type="ExpressionAtlas" id="Q8JZV7">
    <property type="expression patterns" value="baseline and differential"/>
</dbReference>
<dbReference type="GO" id="GO:0046872">
    <property type="term" value="F:metal ion binding"/>
    <property type="evidence" value="ECO:0007669"/>
    <property type="project" value="UniProtKB-KW"/>
</dbReference>
<dbReference type="GO" id="GO:0008448">
    <property type="term" value="F:N-acetylglucosamine-6-phosphate deacetylase activity"/>
    <property type="evidence" value="ECO:0000250"/>
    <property type="project" value="UniProtKB"/>
</dbReference>
<dbReference type="GO" id="GO:0006044">
    <property type="term" value="P:N-acetylglucosamine metabolic process"/>
    <property type="evidence" value="ECO:0007669"/>
    <property type="project" value="InterPro"/>
</dbReference>
<dbReference type="GO" id="GO:0019262">
    <property type="term" value="P:N-acetylneuraminate catabolic process"/>
    <property type="evidence" value="ECO:0000304"/>
    <property type="project" value="UniProtKB"/>
</dbReference>
<dbReference type="GO" id="GO:0106279">
    <property type="term" value="P:negative regulation of UDP-N-acetylglucosamine biosynthetic process"/>
    <property type="evidence" value="ECO:0000315"/>
    <property type="project" value="FlyBase"/>
</dbReference>
<dbReference type="CDD" id="cd00854">
    <property type="entry name" value="NagA"/>
    <property type="match status" value="1"/>
</dbReference>
<dbReference type="FunFam" id="3.20.20.140:FF:000023">
    <property type="entry name" value="N-acetylglucosamine-6-phosphate deacetylase"/>
    <property type="match status" value="1"/>
</dbReference>
<dbReference type="Gene3D" id="3.20.20.140">
    <property type="entry name" value="Metal-dependent hydrolases"/>
    <property type="match status" value="1"/>
</dbReference>
<dbReference type="Gene3D" id="2.30.40.10">
    <property type="entry name" value="Urease, subunit C, domain 1"/>
    <property type="match status" value="1"/>
</dbReference>
<dbReference type="InterPro" id="IPR006680">
    <property type="entry name" value="Amidohydro-rel"/>
</dbReference>
<dbReference type="InterPro" id="IPR003764">
    <property type="entry name" value="GlcNAc_6-P_deAcase"/>
</dbReference>
<dbReference type="InterPro" id="IPR011059">
    <property type="entry name" value="Metal-dep_hydrolase_composite"/>
</dbReference>
<dbReference type="InterPro" id="IPR032466">
    <property type="entry name" value="Metal_Hydrolase"/>
</dbReference>
<dbReference type="NCBIfam" id="TIGR00221">
    <property type="entry name" value="nagA"/>
    <property type="match status" value="1"/>
</dbReference>
<dbReference type="PANTHER" id="PTHR11113">
    <property type="entry name" value="N-ACETYLGLUCOSAMINE-6-PHOSPHATE DEACETYLASE"/>
    <property type="match status" value="1"/>
</dbReference>
<dbReference type="PANTHER" id="PTHR11113:SF14">
    <property type="entry name" value="N-ACETYLGLUCOSAMINE-6-PHOSPHATE DEACETYLASE"/>
    <property type="match status" value="1"/>
</dbReference>
<dbReference type="Pfam" id="PF01979">
    <property type="entry name" value="Amidohydro_1"/>
    <property type="match status" value="1"/>
</dbReference>
<dbReference type="PIRSF" id="PIRSF038994">
    <property type="entry name" value="NagA"/>
    <property type="match status" value="1"/>
</dbReference>
<dbReference type="SUPFAM" id="SSF51338">
    <property type="entry name" value="Composite domain of metallo-dependent hydrolases"/>
    <property type="match status" value="1"/>
</dbReference>
<dbReference type="SUPFAM" id="SSF51556">
    <property type="entry name" value="Metallo-dependent hydrolases"/>
    <property type="match status" value="1"/>
</dbReference>
<proteinExistence type="evidence at protein level"/>
<feature type="chain" id="PRO_0000315777" description="N-acetylglucosamine-6-phosphate deacetylase">
    <location>
        <begin position="1"/>
        <end position="409"/>
    </location>
</feature>
<feature type="active site" description="Proton donor/acceptor" evidence="1">
    <location>
        <position position="294"/>
    </location>
</feature>
<feature type="binding site" evidence="1">
    <location>
        <position position="143"/>
    </location>
    <ligand>
        <name>a divalent metal cation</name>
        <dbReference type="ChEBI" id="CHEBI:60240"/>
    </ligand>
</feature>
<feature type="binding site" evidence="1">
    <location>
        <begin position="154"/>
        <end position="155"/>
    </location>
    <ligand>
        <name>substrate</name>
    </ligand>
</feature>
<feature type="binding site" evidence="1">
    <location>
        <position position="211"/>
    </location>
    <ligand>
        <name>a divalent metal cation</name>
        <dbReference type="ChEBI" id="CHEBI:60240"/>
    </ligand>
</feature>
<feature type="binding site" evidence="1">
    <location>
        <position position="232"/>
    </location>
    <ligand>
        <name>a divalent metal cation</name>
        <dbReference type="ChEBI" id="CHEBI:60240"/>
    </ligand>
</feature>
<feature type="binding site" evidence="1">
    <location>
        <begin position="235"/>
        <end position="236"/>
    </location>
    <ligand>
        <name>substrate</name>
    </ligand>
</feature>
<feature type="binding site" evidence="1">
    <location>
        <position position="243"/>
    </location>
    <ligand>
        <name>substrate</name>
    </ligand>
</feature>
<feature type="binding site" evidence="1">
    <location>
        <begin position="269"/>
        <end position="272"/>
    </location>
    <ligand>
        <name>substrate</name>
    </ligand>
</feature>
<feature type="binding site" evidence="1">
    <location>
        <begin position="328"/>
        <end position="330"/>
    </location>
    <ligand>
        <name>substrate</name>
    </ligand>
</feature>
<feature type="sequence conflict" description="In Ref. 1; BAC36877." evidence="4" ref="1">
    <original>L</original>
    <variation>M</variation>
    <location>
        <position position="354"/>
    </location>
</feature>
<reference key="1">
    <citation type="journal article" date="2005" name="Science">
        <title>The transcriptional landscape of the mammalian genome.</title>
        <authorList>
            <person name="Carninci P."/>
            <person name="Kasukawa T."/>
            <person name="Katayama S."/>
            <person name="Gough J."/>
            <person name="Frith M.C."/>
            <person name="Maeda N."/>
            <person name="Oyama R."/>
            <person name="Ravasi T."/>
            <person name="Lenhard B."/>
            <person name="Wells C."/>
            <person name="Kodzius R."/>
            <person name="Shimokawa K."/>
            <person name="Bajic V.B."/>
            <person name="Brenner S.E."/>
            <person name="Batalov S."/>
            <person name="Forrest A.R."/>
            <person name="Zavolan M."/>
            <person name="Davis M.J."/>
            <person name="Wilming L.G."/>
            <person name="Aidinis V."/>
            <person name="Allen J.E."/>
            <person name="Ambesi-Impiombato A."/>
            <person name="Apweiler R."/>
            <person name="Aturaliya R.N."/>
            <person name="Bailey T.L."/>
            <person name="Bansal M."/>
            <person name="Baxter L."/>
            <person name="Beisel K.W."/>
            <person name="Bersano T."/>
            <person name="Bono H."/>
            <person name="Chalk A.M."/>
            <person name="Chiu K.P."/>
            <person name="Choudhary V."/>
            <person name="Christoffels A."/>
            <person name="Clutterbuck D.R."/>
            <person name="Crowe M.L."/>
            <person name="Dalla E."/>
            <person name="Dalrymple B.P."/>
            <person name="de Bono B."/>
            <person name="Della Gatta G."/>
            <person name="di Bernardo D."/>
            <person name="Down T."/>
            <person name="Engstrom P."/>
            <person name="Fagiolini M."/>
            <person name="Faulkner G."/>
            <person name="Fletcher C.F."/>
            <person name="Fukushima T."/>
            <person name="Furuno M."/>
            <person name="Futaki S."/>
            <person name="Gariboldi M."/>
            <person name="Georgii-Hemming P."/>
            <person name="Gingeras T.R."/>
            <person name="Gojobori T."/>
            <person name="Green R.E."/>
            <person name="Gustincich S."/>
            <person name="Harbers M."/>
            <person name="Hayashi Y."/>
            <person name="Hensch T.K."/>
            <person name="Hirokawa N."/>
            <person name="Hill D."/>
            <person name="Huminiecki L."/>
            <person name="Iacono M."/>
            <person name="Ikeo K."/>
            <person name="Iwama A."/>
            <person name="Ishikawa T."/>
            <person name="Jakt M."/>
            <person name="Kanapin A."/>
            <person name="Katoh M."/>
            <person name="Kawasawa Y."/>
            <person name="Kelso J."/>
            <person name="Kitamura H."/>
            <person name="Kitano H."/>
            <person name="Kollias G."/>
            <person name="Krishnan S.P."/>
            <person name="Kruger A."/>
            <person name="Kummerfeld S.K."/>
            <person name="Kurochkin I.V."/>
            <person name="Lareau L.F."/>
            <person name="Lazarevic D."/>
            <person name="Lipovich L."/>
            <person name="Liu J."/>
            <person name="Liuni S."/>
            <person name="McWilliam S."/>
            <person name="Madan Babu M."/>
            <person name="Madera M."/>
            <person name="Marchionni L."/>
            <person name="Matsuda H."/>
            <person name="Matsuzawa S."/>
            <person name="Miki H."/>
            <person name="Mignone F."/>
            <person name="Miyake S."/>
            <person name="Morris K."/>
            <person name="Mottagui-Tabar S."/>
            <person name="Mulder N."/>
            <person name="Nakano N."/>
            <person name="Nakauchi H."/>
            <person name="Ng P."/>
            <person name="Nilsson R."/>
            <person name="Nishiguchi S."/>
            <person name="Nishikawa S."/>
            <person name="Nori F."/>
            <person name="Ohara O."/>
            <person name="Okazaki Y."/>
            <person name="Orlando V."/>
            <person name="Pang K.C."/>
            <person name="Pavan W.J."/>
            <person name="Pavesi G."/>
            <person name="Pesole G."/>
            <person name="Petrovsky N."/>
            <person name="Piazza S."/>
            <person name="Reed J."/>
            <person name="Reid J.F."/>
            <person name="Ring B.Z."/>
            <person name="Ringwald M."/>
            <person name="Rost B."/>
            <person name="Ruan Y."/>
            <person name="Salzberg S.L."/>
            <person name="Sandelin A."/>
            <person name="Schneider C."/>
            <person name="Schoenbach C."/>
            <person name="Sekiguchi K."/>
            <person name="Semple C.A."/>
            <person name="Seno S."/>
            <person name="Sessa L."/>
            <person name="Sheng Y."/>
            <person name="Shibata Y."/>
            <person name="Shimada H."/>
            <person name="Shimada K."/>
            <person name="Silva D."/>
            <person name="Sinclair B."/>
            <person name="Sperling S."/>
            <person name="Stupka E."/>
            <person name="Sugiura K."/>
            <person name="Sultana R."/>
            <person name="Takenaka Y."/>
            <person name="Taki K."/>
            <person name="Tammoja K."/>
            <person name="Tan S.L."/>
            <person name="Tang S."/>
            <person name="Taylor M.S."/>
            <person name="Tegner J."/>
            <person name="Teichmann S.A."/>
            <person name="Ueda H.R."/>
            <person name="van Nimwegen E."/>
            <person name="Verardo R."/>
            <person name="Wei C.L."/>
            <person name="Yagi K."/>
            <person name="Yamanishi H."/>
            <person name="Zabarovsky E."/>
            <person name="Zhu S."/>
            <person name="Zimmer A."/>
            <person name="Hide W."/>
            <person name="Bult C."/>
            <person name="Grimmond S.M."/>
            <person name="Teasdale R.D."/>
            <person name="Liu E.T."/>
            <person name="Brusic V."/>
            <person name="Quackenbush J."/>
            <person name="Wahlestedt C."/>
            <person name="Mattick J.S."/>
            <person name="Hume D.A."/>
            <person name="Kai C."/>
            <person name="Sasaki D."/>
            <person name="Tomaru Y."/>
            <person name="Fukuda S."/>
            <person name="Kanamori-Katayama M."/>
            <person name="Suzuki M."/>
            <person name="Aoki J."/>
            <person name="Arakawa T."/>
            <person name="Iida J."/>
            <person name="Imamura K."/>
            <person name="Itoh M."/>
            <person name="Kato T."/>
            <person name="Kawaji H."/>
            <person name="Kawagashira N."/>
            <person name="Kawashima T."/>
            <person name="Kojima M."/>
            <person name="Kondo S."/>
            <person name="Konno H."/>
            <person name="Nakano K."/>
            <person name="Ninomiya N."/>
            <person name="Nishio T."/>
            <person name="Okada M."/>
            <person name="Plessy C."/>
            <person name="Shibata K."/>
            <person name="Shiraki T."/>
            <person name="Suzuki S."/>
            <person name="Tagami M."/>
            <person name="Waki K."/>
            <person name="Watahiki A."/>
            <person name="Okamura-Oho Y."/>
            <person name="Suzuki H."/>
            <person name="Kawai J."/>
            <person name="Hayashizaki Y."/>
        </authorList>
    </citation>
    <scope>NUCLEOTIDE SEQUENCE [LARGE SCALE MRNA]</scope>
    <source>
        <strain>C57BL/6J</strain>
        <tissue>Amnion</tissue>
    </source>
</reference>
<reference key="2">
    <citation type="journal article" date="2004" name="Genome Res.">
        <title>The status, quality, and expansion of the NIH full-length cDNA project: the Mammalian Gene Collection (MGC).</title>
        <authorList>
            <consortium name="The MGC Project Team"/>
        </authorList>
    </citation>
    <scope>NUCLEOTIDE SEQUENCE [LARGE SCALE MRNA]</scope>
    <source>
        <strain>FVB/N</strain>
        <tissue>Liver</tissue>
    </source>
</reference>
<reference key="3">
    <citation type="journal article" date="2010" name="Cell">
        <title>A tissue-specific atlas of mouse protein phosphorylation and expression.</title>
        <authorList>
            <person name="Huttlin E.L."/>
            <person name="Jedrychowski M.P."/>
            <person name="Elias J.E."/>
            <person name="Goswami T."/>
            <person name="Rad R."/>
            <person name="Beausoleil S.A."/>
            <person name="Villen J."/>
            <person name="Haas W."/>
            <person name="Sowa M.E."/>
            <person name="Gygi S.P."/>
        </authorList>
    </citation>
    <scope>IDENTIFICATION BY MASS SPECTROMETRY [LARGE SCALE ANALYSIS]</scope>
    <source>
        <tissue>Brown adipose tissue</tissue>
        <tissue>Kidney</tissue>
        <tissue>Liver</tissue>
        <tissue>Spleen</tissue>
        <tissue>Testis</tissue>
    </source>
</reference>
<reference key="4">
    <citation type="journal article" date="2012" name="J. Biol. Chem.">
        <title>Metabolism of vertebrate amino sugars with N-glycolyl groups: elucidating the intracellular fate of the non-human sialic acid N-glycolylneuraminic acid.</title>
        <authorList>
            <person name="Bergfeld A.K."/>
            <person name="Pearce O.M."/>
            <person name="Diaz S.L."/>
            <person name="Pham T."/>
            <person name="Varki A."/>
        </authorList>
    </citation>
    <scope>PATHWAY</scope>
</reference>
<gene>
    <name type="primary">Amdhd2</name>
</gene>
<evidence type="ECO:0000250" key="1">
    <source>
        <dbReference type="UniProtKB" id="P0AF18"/>
    </source>
</evidence>
<evidence type="ECO:0000250" key="2">
    <source>
        <dbReference type="UniProtKB" id="Q9Y303"/>
    </source>
</evidence>
<evidence type="ECO:0000269" key="3">
    <source>
    </source>
</evidence>
<evidence type="ECO:0000305" key="4"/>
<name>NAGA_MOUSE</name>
<comment type="function">
    <text evidence="2">Hydrolyzes the N-glycolyl group from N-glycolylglucosamine 6-phosphate (GlcNGc-6-P) in the N-glycolylneuraminic acid (Neu5Gc) degradation pathway.</text>
</comment>
<comment type="catalytic activity">
    <reaction evidence="2">
        <text>N-acetyl-D-glucosamine 6-phosphate + H2O = D-glucosamine 6-phosphate + acetate</text>
        <dbReference type="Rhea" id="RHEA:22936"/>
        <dbReference type="ChEBI" id="CHEBI:15377"/>
        <dbReference type="ChEBI" id="CHEBI:30089"/>
        <dbReference type="ChEBI" id="CHEBI:57513"/>
        <dbReference type="ChEBI" id="CHEBI:58725"/>
        <dbReference type="EC" id="3.5.1.25"/>
    </reaction>
</comment>
<comment type="cofactor">
    <cofactor evidence="1">
        <name>a divalent metal cation</name>
        <dbReference type="ChEBI" id="CHEBI:60240"/>
    </cofactor>
    <text evidence="1">Binds 1 divalent metal cation per subunit.</text>
</comment>
<comment type="pathway">
    <text evidence="3">Amino-sugar metabolism; N-acetylneuraminate degradation.</text>
</comment>
<comment type="similarity">
    <text evidence="4">Belongs to the metallo-dependent hydrolases superfamily. NagA family.</text>
</comment>
<protein>
    <recommendedName>
        <fullName evidence="2">N-acetylglucosamine-6-phosphate deacetylase</fullName>
        <shortName evidence="2">GlcNAc 6-P deacetylase</shortName>
        <ecNumber evidence="2">3.5.1.25</ecNumber>
    </recommendedName>
    <alternativeName>
        <fullName evidence="2">Amidohydrolase domain-containing protein 2</fullName>
    </alternativeName>
</protein>
<organism>
    <name type="scientific">Mus musculus</name>
    <name type="common">Mouse</name>
    <dbReference type="NCBI Taxonomy" id="10090"/>
    <lineage>
        <taxon>Eukaryota</taxon>
        <taxon>Metazoa</taxon>
        <taxon>Chordata</taxon>
        <taxon>Craniata</taxon>
        <taxon>Vertebrata</taxon>
        <taxon>Euteleostomi</taxon>
        <taxon>Mammalia</taxon>
        <taxon>Eutheria</taxon>
        <taxon>Euarchontoglires</taxon>
        <taxon>Glires</taxon>
        <taxon>Rodentia</taxon>
        <taxon>Myomorpha</taxon>
        <taxon>Muroidea</taxon>
        <taxon>Muridae</taxon>
        <taxon>Murinae</taxon>
        <taxon>Mus</taxon>
        <taxon>Mus</taxon>
    </lineage>
</organism>
<sequence>MRSGQCAAGAPVLQFTNCRILRGGTLLREDLWVRGGRILDPEKLFFEERRVADEQRDCGGRILAPGFIDVQINGGFGVDFSKATEDVGSGVALVARRLLSHGVTSFCPTLVTSPPEVYHKVLPQIPVKSGGPHGAGVLGVHLEGPFISREKRGAHPEAYLRSFEANAFHDVLATYGPLDNVCIVTLAPELDRSHEVIQALTAQGIRVSLGHSVADLRAAEVAVQSGATFITHLFNAMLPFHHRDPGIVGLLTSDQLPPGHCIFYGMIADGIHTNPAALRIAHRAHPQGLVLVTDAVPALGLGNGRHTLGQQEVEVDGLIAYIAGTKTLGGSIAPMDVCVRHFLQATGCSVESALEAASLHPAQMLGLEKTKGSLDFGADADFVVLDDTLHVQATYISGELVWQAEEAGP</sequence>
<accession>Q8JZV7</accession>
<accession>Q8BK10</accession>
<keyword id="KW-0119">Carbohydrate metabolism</keyword>
<keyword id="KW-0378">Hydrolase</keyword>
<keyword id="KW-0479">Metal-binding</keyword>
<keyword id="KW-1185">Reference proteome</keyword>